<dbReference type="EMBL" id="CP000712">
    <property type="protein sequence ID" value="ABQ80886.1"/>
    <property type="molecule type" value="Genomic_DNA"/>
</dbReference>
<dbReference type="SMR" id="A5W9S6"/>
<dbReference type="KEGG" id="ppf:Pput_4766"/>
<dbReference type="eggNOG" id="COG3705">
    <property type="taxonomic scope" value="Bacteria"/>
</dbReference>
<dbReference type="HOGENOM" id="CLU_025113_0_1_6"/>
<dbReference type="UniPathway" id="UPA00031">
    <property type="reaction ID" value="UER00006"/>
</dbReference>
<dbReference type="GO" id="GO:0005737">
    <property type="term" value="C:cytoplasm"/>
    <property type="evidence" value="ECO:0007669"/>
    <property type="project" value="UniProtKB-SubCell"/>
</dbReference>
<dbReference type="GO" id="GO:0000105">
    <property type="term" value="P:L-histidine biosynthetic process"/>
    <property type="evidence" value="ECO:0007669"/>
    <property type="project" value="UniProtKB-UniRule"/>
</dbReference>
<dbReference type="CDD" id="cd00773">
    <property type="entry name" value="HisRS-like_core"/>
    <property type="match status" value="1"/>
</dbReference>
<dbReference type="Gene3D" id="3.30.930.10">
    <property type="entry name" value="Bira Bifunctional Protein, Domain 2"/>
    <property type="match status" value="1"/>
</dbReference>
<dbReference type="HAMAP" id="MF_00125">
    <property type="entry name" value="HisZ"/>
    <property type="match status" value="1"/>
</dbReference>
<dbReference type="InterPro" id="IPR045864">
    <property type="entry name" value="aa-tRNA-synth_II/BPL/LPL"/>
</dbReference>
<dbReference type="InterPro" id="IPR041715">
    <property type="entry name" value="HisRS-like_core"/>
</dbReference>
<dbReference type="InterPro" id="IPR004516">
    <property type="entry name" value="HisRS/HisZ"/>
</dbReference>
<dbReference type="InterPro" id="IPR004517">
    <property type="entry name" value="HisZ"/>
</dbReference>
<dbReference type="NCBIfam" id="TIGR00443">
    <property type="entry name" value="hisZ_biosyn_reg"/>
    <property type="match status" value="1"/>
</dbReference>
<dbReference type="NCBIfam" id="NF008935">
    <property type="entry name" value="PRK12292.1-1"/>
    <property type="match status" value="1"/>
</dbReference>
<dbReference type="NCBIfam" id="NF008937">
    <property type="entry name" value="PRK12292.1-4"/>
    <property type="match status" value="1"/>
</dbReference>
<dbReference type="NCBIfam" id="NF009086">
    <property type="entry name" value="PRK12421.1"/>
    <property type="match status" value="1"/>
</dbReference>
<dbReference type="PANTHER" id="PTHR11476:SF7">
    <property type="entry name" value="HISTIDINE--TRNA LIGASE"/>
    <property type="match status" value="1"/>
</dbReference>
<dbReference type="PANTHER" id="PTHR11476">
    <property type="entry name" value="HISTIDYL-TRNA SYNTHETASE"/>
    <property type="match status" value="1"/>
</dbReference>
<dbReference type="Pfam" id="PF13393">
    <property type="entry name" value="tRNA-synt_His"/>
    <property type="match status" value="1"/>
</dbReference>
<dbReference type="PIRSF" id="PIRSF001549">
    <property type="entry name" value="His-tRNA_synth"/>
    <property type="match status" value="1"/>
</dbReference>
<dbReference type="SUPFAM" id="SSF55681">
    <property type="entry name" value="Class II aaRS and biotin synthetases"/>
    <property type="match status" value="1"/>
</dbReference>
<gene>
    <name evidence="1" type="primary">hisZ</name>
    <name type="ordered locus">Pput_4766</name>
</gene>
<proteinExistence type="inferred from homology"/>
<accession>A5W9S6</accession>
<comment type="function">
    <text evidence="1">Required for the first step of histidine biosynthesis. May allow the feedback regulation of ATP phosphoribosyltransferase activity by histidine.</text>
</comment>
<comment type="pathway">
    <text evidence="1">Amino-acid biosynthesis; L-histidine biosynthesis; L-histidine from 5-phospho-alpha-D-ribose 1-diphosphate: step 1/9.</text>
</comment>
<comment type="subunit">
    <text evidence="1">Heteromultimer composed of HisG and HisZ subunits.</text>
</comment>
<comment type="subcellular location">
    <subcellularLocation>
        <location evidence="1">Cytoplasm</location>
    </subcellularLocation>
</comment>
<comment type="miscellaneous">
    <text>This function is generally fulfilled by the C-terminal part of HisG, which is missing in some bacteria such as this one.</text>
</comment>
<comment type="similarity">
    <text evidence="1">Belongs to the class-II aminoacyl-tRNA synthetase family. HisZ subfamily.</text>
</comment>
<feature type="chain" id="PRO_1000016279" description="ATP phosphoribosyltransferase regulatory subunit">
    <location>
        <begin position="1"/>
        <end position="395"/>
    </location>
</feature>
<keyword id="KW-0028">Amino-acid biosynthesis</keyword>
<keyword id="KW-0963">Cytoplasm</keyword>
<keyword id="KW-0368">Histidine biosynthesis</keyword>
<organism>
    <name type="scientific">Pseudomonas putida (strain ATCC 700007 / DSM 6899 / JCM 31910 / BCRC 17059 / LMG 24140 / F1)</name>
    <dbReference type="NCBI Taxonomy" id="351746"/>
    <lineage>
        <taxon>Bacteria</taxon>
        <taxon>Pseudomonadati</taxon>
        <taxon>Pseudomonadota</taxon>
        <taxon>Gammaproteobacteria</taxon>
        <taxon>Pseudomonadales</taxon>
        <taxon>Pseudomonadaceae</taxon>
        <taxon>Pseudomonas</taxon>
    </lineage>
</organism>
<sequence length="395" mass="42936">MATVDRWLLPDGIEEVLPPEAARIEIARRQVLDLFQSWGYELVVTPHIEYLESLLTGAGQDLDQRTFKVVDPQSGRLMGFRADFTPQVARIDAHTLRREGPSRLCYAGSVLHAQPRALSTSRSPIQLGAELYGDASPTSDVEVISLMLATLQLADVPDVHMDLGHVGIYRGLARAAGLSGAVEQQLFDAMQRKAVDEVQALTADLPKDLGSMLRALVELCGGREVLAEARVRLGRAPASVLAALDDLLAIADRLASRYPDLPLYFDLGELRGYHYHTGVVFAVFVPGEGQSIAQGGRYDDIGADFGRARPATGFSTDLKTLVTLGRAEVVLPTGGIWMPDSGDAALWQQVCQLRNEGQRVVQALPGQPLSAALEADCDRQLIQQDGRWQVLPLAQ</sequence>
<protein>
    <recommendedName>
        <fullName evidence="1">ATP phosphoribosyltransferase regulatory subunit</fullName>
    </recommendedName>
</protein>
<evidence type="ECO:0000255" key="1">
    <source>
        <dbReference type="HAMAP-Rule" id="MF_00125"/>
    </source>
</evidence>
<reference key="1">
    <citation type="submission" date="2007-05" db="EMBL/GenBank/DDBJ databases">
        <title>Complete sequence of Pseudomonas putida F1.</title>
        <authorList>
            <consortium name="US DOE Joint Genome Institute"/>
            <person name="Copeland A."/>
            <person name="Lucas S."/>
            <person name="Lapidus A."/>
            <person name="Barry K."/>
            <person name="Detter J.C."/>
            <person name="Glavina del Rio T."/>
            <person name="Hammon N."/>
            <person name="Israni S."/>
            <person name="Dalin E."/>
            <person name="Tice H."/>
            <person name="Pitluck S."/>
            <person name="Chain P."/>
            <person name="Malfatti S."/>
            <person name="Shin M."/>
            <person name="Vergez L."/>
            <person name="Schmutz J."/>
            <person name="Larimer F."/>
            <person name="Land M."/>
            <person name="Hauser L."/>
            <person name="Kyrpides N."/>
            <person name="Lykidis A."/>
            <person name="Parales R."/>
            <person name="Richardson P."/>
        </authorList>
    </citation>
    <scope>NUCLEOTIDE SEQUENCE [LARGE SCALE GENOMIC DNA]</scope>
    <source>
        <strain>ATCC 700007 / DSM 6899 / JCM 31910 / BCRC 17059 / LMG 24140 / F1</strain>
    </source>
</reference>
<name>HISZ_PSEP1</name>